<name>EFGM_ORYSJ</name>
<feature type="chain" id="PRO_0000007447" description="Elongation factor G, mitochondrial">
    <location>
        <begin position="1"/>
        <end position="757"/>
    </location>
</feature>
<feature type="domain" description="tr-type G">
    <location>
        <begin position="66"/>
        <end position="344"/>
    </location>
</feature>
<feature type="binding site" evidence="1">
    <location>
        <begin position="75"/>
        <end position="82"/>
    </location>
    <ligand>
        <name>GTP</name>
        <dbReference type="ChEBI" id="CHEBI:37565"/>
    </ligand>
</feature>
<feature type="binding site" evidence="1">
    <location>
        <begin position="142"/>
        <end position="146"/>
    </location>
    <ligand>
        <name>GTP</name>
        <dbReference type="ChEBI" id="CHEBI:37565"/>
    </ligand>
</feature>
<feature type="binding site" evidence="1">
    <location>
        <begin position="196"/>
        <end position="199"/>
    </location>
    <ligand>
        <name>GTP</name>
        <dbReference type="ChEBI" id="CHEBI:37565"/>
    </ligand>
</feature>
<feature type="sequence conflict" description="In Ref. 1; BAB13514/BAB13515." evidence="2" ref="1">
    <original>S</original>
    <variation>F</variation>
    <location>
        <position position="45"/>
    </location>
</feature>
<feature type="sequence conflict" description="In Ref. 1; BAB13514/BAB13515." evidence="2" ref="1">
    <original>ALR</original>
    <variation>RLG</variation>
    <location>
        <begin position="156"/>
        <end position="158"/>
    </location>
</feature>
<feature type="sequence conflict" description="In Ref. 1; BAB13514/BAB13515." evidence="2" ref="1">
    <original>ASD</original>
    <variation>RIC</variation>
    <location>
        <begin position="257"/>
        <end position="259"/>
    </location>
</feature>
<feature type="sequence conflict" description="In Ref. 1; BAB13514/BAB13515." evidence="2" ref="1">
    <original>S</original>
    <variation>T</variation>
    <location>
        <position position="347"/>
    </location>
</feature>
<organism>
    <name type="scientific">Oryza sativa subsp. japonica</name>
    <name type="common">Rice</name>
    <dbReference type="NCBI Taxonomy" id="39947"/>
    <lineage>
        <taxon>Eukaryota</taxon>
        <taxon>Viridiplantae</taxon>
        <taxon>Streptophyta</taxon>
        <taxon>Embryophyta</taxon>
        <taxon>Tracheophyta</taxon>
        <taxon>Spermatophyta</taxon>
        <taxon>Magnoliopsida</taxon>
        <taxon>Liliopsida</taxon>
        <taxon>Poales</taxon>
        <taxon>Poaceae</taxon>
        <taxon>BOP clade</taxon>
        <taxon>Oryzoideae</taxon>
        <taxon>Oryzeae</taxon>
        <taxon>Oryzinae</taxon>
        <taxon>Oryza</taxon>
        <taxon>Oryza sativa</taxon>
    </lineage>
</organism>
<protein>
    <recommendedName>
        <fullName evidence="1">Elongation factor G, mitochondrial</fullName>
        <shortName evidence="1">EF-Gmt</shortName>
    </recommendedName>
    <alternativeName>
        <fullName evidence="1">Elongation factor G 1, mitochondrial</fullName>
        <shortName evidence="1">mEF-G 1</shortName>
    </alternativeName>
    <alternativeName>
        <fullName evidence="1">Elongation factor G1</fullName>
    </alternativeName>
</protein>
<proteinExistence type="evidence at transcript level"/>
<evidence type="ECO:0000255" key="1">
    <source>
        <dbReference type="HAMAP-Rule" id="MF_03061"/>
    </source>
</evidence>
<evidence type="ECO:0000305" key="2"/>
<gene>
    <name type="ordered locus">Os03g0565500</name>
    <name type="ordered locus">LOC_Os03g36780</name>
    <name type="ORF">OSJNBa0026A15.1</name>
</gene>
<accession>Q9FE64</accession>
<accession>Q10I39</accession>
<accession>Q94I51</accession>
<accession>Q94LE1</accession>
<comment type="function">
    <text evidence="1">Mitochondrial GTPase that catalyzes the GTP-dependent ribosomal translocation step during translation elongation. During this step, the ribosome changes from the pre-translocational (PRE) to the post-translocational (POST) state as the newly formed A-site-bound peptidyl-tRNA and P-site-bound deacylated tRNA move to the P and E sites, respectively. Catalyzes the coordinated movement of the two tRNA molecules, the mRNA and conformational changes in the ribosome.</text>
</comment>
<comment type="pathway">
    <text evidence="1">Protein biosynthesis; polypeptide chain elongation.</text>
</comment>
<comment type="subcellular location">
    <subcellularLocation>
        <location>Mitochondrion</location>
    </subcellularLocation>
</comment>
<comment type="miscellaneous">
    <text evidence="1">This protein may be expected to contain an N-terminal transit peptide but none has been predicted.</text>
</comment>
<comment type="similarity">
    <text evidence="2">Belongs to the TRAFAC class translation factor GTPase superfamily. Classic translation factor GTPase family. EF-G/EF-2 subfamily.</text>
</comment>
<comment type="sequence caution" evidence="2">
    <conflict type="erroneous gene model prediction">
        <sequence resource="EMBL-CDS" id="AAK53868"/>
    </conflict>
</comment>
<sequence>MAMARRSASRLLSSFRPFSLLLQPLDDAPSLSAAAAAASARRGMSSASALRARDEKEVARWRESMDRMRNIGISAHIDSGKTTLTERVLYYTGRIHEIHEVRGRDGVGAKMDSMDLEREKGITIQSAATYCTWNGYQVNIIDTPGHVDFTIEVERALRVLDGAILVLCSVGGVQSQSITVDRQMRRYEIPRVAFINKLDRMGADPWKVLNQARSKLRHHNAAVQVPIGLEEEFEGLVDLVELKAYKFEGGSGQNVVASDVPSNMQDLVMEKRRELIEVVSEVDDQLAEAFLNDEPIQANQLKAAIRRATVARKFIPVYMGSAFKNKGVQPLLDGVLDYLPCPMEVESYALDQNKSEEKVLLAGTPAEPLVALAFKLEEGRFGQLTYLRIYDGVIRKGDFIYNVNTGKKIKVPRLVRMHSNEMEDIQEAHAGQIVAVFGVDCASGDTFTDGSVKYTMTSMNVPEPVMSLAVSPISKDSGGQFSKALNRFQKEDPTFRVGLDPESGETIISGMGELHLDIYVERIRREYKVDAKVGKPRVNFRETITQRAEFDYLHKKQSGGQGQYGRVCGYIEPLPSESDGKFEFDNMIIGQAIPSNFIPAIEKGFKEACNSGSLIGHPVENIRIVLTDGASHAVDSSELAFKLASIYAFRQCYAAARPVILEPVMKVELKVPTEFQGTVTGDMNKRKGIIVGNDQEGDDTVVVCHVPLNNMFGYSTALRSMTQGKGEFSMEYLEHNTVSQDVQMQLVNTYKASRGTE</sequence>
<dbReference type="EMBL" id="AB040051">
    <property type="protein sequence ID" value="BAB13514.1"/>
    <property type="molecule type" value="mRNA"/>
</dbReference>
<dbReference type="EMBL" id="AB040052">
    <property type="protein sequence ID" value="BAB13515.1"/>
    <property type="molecule type" value="Genomic_DNA"/>
</dbReference>
<dbReference type="EMBL" id="AC016781">
    <property type="protein sequence ID" value="AAK53868.1"/>
    <property type="status" value="ALT_SEQ"/>
    <property type="molecule type" value="Genomic_DNA"/>
</dbReference>
<dbReference type="EMBL" id="AC084404">
    <property type="protein sequence ID" value="AAK50578.1"/>
    <property type="molecule type" value="Genomic_DNA"/>
</dbReference>
<dbReference type="EMBL" id="DP000009">
    <property type="protein sequence ID" value="ABF97151.1"/>
    <property type="molecule type" value="Genomic_DNA"/>
</dbReference>
<dbReference type="EMBL" id="AP008209">
    <property type="protein sequence ID" value="BAF12415.1"/>
    <property type="molecule type" value="Genomic_DNA"/>
</dbReference>
<dbReference type="EMBL" id="AP014959">
    <property type="protein sequence ID" value="BAS84953.1"/>
    <property type="molecule type" value="Genomic_DNA"/>
</dbReference>
<dbReference type="RefSeq" id="XP_015631992.1">
    <property type="nucleotide sequence ID" value="XM_015776506.1"/>
</dbReference>
<dbReference type="SMR" id="Q9FE64"/>
<dbReference type="FunCoup" id="Q9FE64">
    <property type="interactions" value="1982"/>
</dbReference>
<dbReference type="STRING" id="39947.Q9FE64"/>
<dbReference type="PaxDb" id="39947-Q9FE64"/>
<dbReference type="EnsemblPlants" id="Os03t0565500-01">
    <property type="protein sequence ID" value="Os03t0565500-01"/>
    <property type="gene ID" value="Os03g0565500"/>
</dbReference>
<dbReference type="Gramene" id="Os03t0565500-01">
    <property type="protein sequence ID" value="Os03t0565500-01"/>
    <property type="gene ID" value="Os03g0565500"/>
</dbReference>
<dbReference type="KEGG" id="dosa:Os03g0565500"/>
<dbReference type="eggNOG" id="KOG0465">
    <property type="taxonomic scope" value="Eukaryota"/>
</dbReference>
<dbReference type="HOGENOM" id="CLU_002794_4_0_1"/>
<dbReference type="InParanoid" id="Q9FE64"/>
<dbReference type="OMA" id="TEYIPSC"/>
<dbReference type="OrthoDB" id="198619at2759"/>
<dbReference type="UniPathway" id="UPA00345"/>
<dbReference type="Proteomes" id="UP000000763">
    <property type="component" value="Chromosome 3"/>
</dbReference>
<dbReference type="Proteomes" id="UP000059680">
    <property type="component" value="Chromosome 3"/>
</dbReference>
<dbReference type="GO" id="GO:0005739">
    <property type="term" value="C:mitochondrion"/>
    <property type="evidence" value="ECO:0000318"/>
    <property type="project" value="GO_Central"/>
</dbReference>
<dbReference type="GO" id="GO:0005525">
    <property type="term" value="F:GTP binding"/>
    <property type="evidence" value="ECO:0007669"/>
    <property type="project" value="UniProtKB-UniRule"/>
</dbReference>
<dbReference type="GO" id="GO:0003924">
    <property type="term" value="F:GTPase activity"/>
    <property type="evidence" value="ECO:0000318"/>
    <property type="project" value="GO_Central"/>
</dbReference>
<dbReference type="GO" id="GO:0003746">
    <property type="term" value="F:translation elongation factor activity"/>
    <property type="evidence" value="ECO:0000318"/>
    <property type="project" value="GO_Central"/>
</dbReference>
<dbReference type="GO" id="GO:0070125">
    <property type="term" value="P:mitochondrial translational elongation"/>
    <property type="evidence" value="ECO:0000318"/>
    <property type="project" value="GO_Central"/>
</dbReference>
<dbReference type="CDD" id="cd01886">
    <property type="entry name" value="EF-G"/>
    <property type="match status" value="1"/>
</dbReference>
<dbReference type="CDD" id="cd16262">
    <property type="entry name" value="EFG_III"/>
    <property type="match status" value="1"/>
</dbReference>
<dbReference type="CDD" id="cd01434">
    <property type="entry name" value="EFG_mtEFG1_IV"/>
    <property type="match status" value="1"/>
</dbReference>
<dbReference type="CDD" id="cd04097">
    <property type="entry name" value="mtEFG1_C"/>
    <property type="match status" value="1"/>
</dbReference>
<dbReference type="CDD" id="cd04091">
    <property type="entry name" value="mtEFG1_II_like"/>
    <property type="match status" value="1"/>
</dbReference>
<dbReference type="FunFam" id="3.30.230.10:FF:000003">
    <property type="entry name" value="Elongation factor G"/>
    <property type="match status" value="1"/>
</dbReference>
<dbReference type="FunFam" id="3.30.70.240:FF:000001">
    <property type="entry name" value="Elongation factor G"/>
    <property type="match status" value="1"/>
</dbReference>
<dbReference type="FunFam" id="3.30.70.870:FF:000001">
    <property type="entry name" value="Elongation factor G"/>
    <property type="match status" value="1"/>
</dbReference>
<dbReference type="FunFam" id="2.40.30.10:FF:000022">
    <property type="entry name" value="Elongation factor G, mitochondrial"/>
    <property type="match status" value="1"/>
</dbReference>
<dbReference type="FunFam" id="3.40.50.300:FF:000558">
    <property type="entry name" value="Elongation factor G, mitochondrial"/>
    <property type="match status" value="1"/>
</dbReference>
<dbReference type="Gene3D" id="3.30.230.10">
    <property type="match status" value="1"/>
</dbReference>
<dbReference type="Gene3D" id="3.30.70.240">
    <property type="match status" value="1"/>
</dbReference>
<dbReference type="Gene3D" id="3.30.70.870">
    <property type="entry name" value="Elongation Factor G (Translational Gtpase), domain 3"/>
    <property type="match status" value="1"/>
</dbReference>
<dbReference type="Gene3D" id="3.40.50.300">
    <property type="entry name" value="P-loop containing nucleotide triphosphate hydrolases"/>
    <property type="match status" value="1"/>
</dbReference>
<dbReference type="Gene3D" id="2.40.30.10">
    <property type="entry name" value="Translation factors"/>
    <property type="match status" value="1"/>
</dbReference>
<dbReference type="HAMAP" id="MF_00054_B">
    <property type="entry name" value="EF_G_EF_2_B"/>
    <property type="match status" value="1"/>
</dbReference>
<dbReference type="InterPro" id="IPR041095">
    <property type="entry name" value="EFG_II"/>
</dbReference>
<dbReference type="InterPro" id="IPR009022">
    <property type="entry name" value="EFG_III"/>
</dbReference>
<dbReference type="InterPro" id="IPR035647">
    <property type="entry name" value="EFG_III/V"/>
</dbReference>
<dbReference type="InterPro" id="IPR047872">
    <property type="entry name" value="EFG_IV"/>
</dbReference>
<dbReference type="InterPro" id="IPR035649">
    <property type="entry name" value="EFG_V"/>
</dbReference>
<dbReference type="InterPro" id="IPR000640">
    <property type="entry name" value="EFG_V-like"/>
</dbReference>
<dbReference type="InterPro" id="IPR004161">
    <property type="entry name" value="EFTu-like_2"/>
</dbReference>
<dbReference type="InterPro" id="IPR031157">
    <property type="entry name" value="G_TR_CS"/>
</dbReference>
<dbReference type="InterPro" id="IPR027417">
    <property type="entry name" value="P-loop_NTPase"/>
</dbReference>
<dbReference type="InterPro" id="IPR020568">
    <property type="entry name" value="Ribosomal_Su5_D2-typ_SF"/>
</dbReference>
<dbReference type="InterPro" id="IPR014721">
    <property type="entry name" value="Ribsml_uS5_D2-typ_fold_subgr"/>
</dbReference>
<dbReference type="InterPro" id="IPR005225">
    <property type="entry name" value="Small_GTP-bd"/>
</dbReference>
<dbReference type="InterPro" id="IPR000795">
    <property type="entry name" value="T_Tr_GTP-bd_dom"/>
</dbReference>
<dbReference type="InterPro" id="IPR009000">
    <property type="entry name" value="Transl_B-barrel_sf"/>
</dbReference>
<dbReference type="InterPro" id="IPR004540">
    <property type="entry name" value="Transl_elong_EFG/EF2"/>
</dbReference>
<dbReference type="InterPro" id="IPR005517">
    <property type="entry name" value="Transl_elong_EFG/EF2_IV"/>
</dbReference>
<dbReference type="NCBIfam" id="TIGR00484">
    <property type="entry name" value="EF-G"/>
    <property type="match status" value="1"/>
</dbReference>
<dbReference type="NCBIfam" id="NF009381">
    <property type="entry name" value="PRK12740.1-5"/>
    <property type="match status" value="1"/>
</dbReference>
<dbReference type="NCBIfam" id="TIGR00231">
    <property type="entry name" value="small_GTP"/>
    <property type="match status" value="1"/>
</dbReference>
<dbReference type="PANTHER" id="PTHR43636">
    <property type="entry name" value="ELONGATION FACTOR G, MITOCHONDRIAL"/>
    <property type="match status" value="1"/>
</dbReference>
<dbReference type="PANTHER" id="PTHR43636:SF2">
    <property type="entry name" value="ELONGATION FACTOR G, MITOCHONDRIAL"/>
    <property type="match status" value="1"/>
</dbReference>
<dbReference type="Pfam" id="PF00679">
    <property type="entry name" value="EFG_C"/>
    <property type="match status" value="1"/>
</dbReference>
<dbReference type="Pfam" id="PF14492">
    <property type="entry name" value="EFG_III"/>
    <property type="match status" value="1"/>
</dbReference>
<dbReference type="Pfam" id="PF03764">
    <property type="entry name" value="EFG_IV"/>
    <property type="match status" value="1"/>
</dbReference>
<dbReference type="Pfam" id="PF00009">
    <property type="entry name" value="GTP_EFTU"/>
    <property type="match status" value="1"/>
</dbReference>
<dbReference type="Pfam" id="PF03144">
    <property type="entry name" value="GTP_EFTU_D2"/>
    <property type="match status" value="1"/>
</dbReference>
<dbReference type="PRINTS" id="PR00315">
    <property type="entry name" value="ELONGATNFCT"/>
</dbReference>
<dbReference type="SMART" id="SM00838">
    <property type="entry name" value="EFG_C"/>
    <property type="match status" value="1"/>
</dbReference>
<dbReference type="SMART" id="SM00889">
    <property type="entry name" value="EFG_IV"/>
    <property type="match status" value="1"/>
</dbReference>
<dbReference type="SUPFAM" id="SSF54980">
    <property type="entry name" value="EF-G C-terminal domain-like"/>
    <property type="match status" value="2"/>
</dbReference>
<dbReference type="SUPFAM" id="SSF52540">
    <property type="entry name" value="P-loop containing nucleoside triphosphate hydrolases"/>
    <property type="match status" value="1"/>
</dbReference>
<dbReference type="SUPFAM" id="SSF54211">
    <property type="entry name" value="Ribosomal protein S5 domain 2-like"/>
    <property type="match status" value="1"/>
</dbReference>
<dbReference type="SUPFAM" id="SSF50447">
    <property type="entry name" value="Translation proteins"/>
    <property type="match status" value="1"/>
</dbReference>
<dbReference type="PROSITE" id="PS00301">
    <property type="entry name" value="G_TR_1"/>
    <property type="match status" value="1"/>
</dbReference>
<dbReference type="PROSITE" id="PS51722">
    <property type="entry name" value="G_TR_2"/>
    <property type="match status" value="1"/>
</dbReference>
<reference key="1">
    <citation type="journal article" date="2000" name="DNA Seq.">
        <title>Identification and characterization of the gene encoding the mitochondrial elongation factor G in rice.</title>
        <authorList>
            <person name="Kato A."/>
            <person name="Fujita S."/>
            <person name="Komeda Y."/>
        </authorList>
    </citation>
    <scope>NUCLEOTIDE SEQUENCE [MRNA]</scope>
    <source>
        <strain>cv. Nipponbare</strain>
    </source>
</reference>
<reference key="2">
    <citation type="journal article" date="2005" name="Genome Res.">
        <title>Sequence, annotation, and analysis of synteny between rice chromosome 3 and diverged grass species.</title>
        <authorList>
            <consortium name="The rice chromosome 3 sequencing consortium"/>
            <person name="Buell C.R."/>
            <person name="Yuan Q."/>
            <person name="Ouyang S."/>
            <person name="Liu J."/>
            <person name="Zhu W."/>
            <person name="Wang A."/>
            <person name="Maiti R."/>
            <person name="Haas B."/>
            <person name="Wortman J."/>
            <person name="Pertea M."/>
            <person name="Jones K.M."/>
            <person name="Kim M."/>
            <person name="Overton L."/>
            <person name="Tsitrin T."/>
            <person name="Fadrosh D."/>
            <person name="Bera J."/>
            <person name="Weaver B."/>
            <person name="Jin S."/>
            <person name="Johri S."/>
            <person name="Reardon M."/>
            <person name="Webb K."/>
            <person name="Hill J."/>
            <person name="Moffat K."/>
            <person name="Tallon L."/>
            <person name="Van Aken S."/>
            <person name="Lewis M."/>
            <person name="Utterback T."/>
            <person name="Feldblyum T."/>
            <person name="Zismann V."/>
            <person name="Iobst S."/>
            <person name="Hsiao J."/>
            <person name="de Vazeille A.R."/>
            <person name="Salzberg S.L."/>
            <person name="White O."/>
            <person name="Fraser C.M."/>
            <person name="Yu Y."/>
            <person name="Kim H."/>
            <person name="Rambo T."/>
            <person name="Currie J."/>
            <person name="Collura K."/>
            <person name="Kernodle-Thompson S."/>
            <person name="Wei F."/>
            <person name="Kudrna K."/>
            <person name="Ammiraju J.S.S."/>
            <person name="Luo M."/>
            <person name="Goicoechea J.L."/>
            <person name="Wing R.A."/>
            <person name="Henry D."/>
            <person name="Oates R."/>
            <person name="Palmer M."/>
            <person name="Pries G."/>
            <person name="Saski C."/>
            <person name="Simmons J."/>
            <person name="Soderlund C."/>
            <person name="Nelson W."/>
            <person name="de la Bastide M."/>
            <person name="Spiegel L."/>
            <person name="Nascimento L."/>
            <person name="Huang E."/>
            <person name="Preston R."/>
            <person name="Zutavern T."/>
            <person name="Palmer L."/>
            <person name="O'Shaughnessy A."/>
            <person name="Dike S."/>
            <person name="McCombie W.R."/>
            <person name="Minx P."/>
            <person name="Cordum H."/>
            <person name="Wilson R."/>
            <person name="Jin W."/>
            <person name="Lee H.R."/>
            <person name="Jiang J."/>
            <person name="Jackson S."/>
        </authorList>
    </citation>
    <scope>NUCLEOTIDE SEQUENCE [LARGE SCALE GENOMIC DNA]</scope>
    <source>
        <strain>cv. Nipponbare</strain>
    </source>
</reference>
<reference key="3">
    <citation type="journal article" date="2005" name="Nature">
        <title>The map-based sequence of the rice genome.</title>
        <authorList>
            <consortium name="International rice genome sequencing project (IRGSP)"/>
        </authorList>
    </citation>
    <scope>NUCLEOTIDE SEQUENCE [LARGE SCALE GENOMIC DNA]</scope>
    <source>
        <strain>cv. Nipponbare</strain>
    </source>
</reference>
<reference key="4">
    <citation type="journal article" date="2008" name="Nucleic Acids Res.">
        <title>The rice annotation project database (RAP-DB): 2008 update.</title>
        <authorList>
            <consortium name="The rice annotation project (RAP)"/>
        </authorList>
    </citation>
    <scope>GENOME REANNOTATION</scope>
    <source>
        <strain>cv. Nipponbare</strain>
    </source>
</reference>
<reference key="5">
    <citation type="journal article" date="2013" name="Rice">
        <title>Improvement of the Oryza sativa Nipponbare reference genome using next generation sequence and optical map data.</title>
        <authorList>
            <person name="Kawahara Y."/>
            <person name="de la Bastide M."/>
            <person name="Hamilton J.P."/>
            <person name="Kanamori H."/>
            <person name="McCombie W.R."/>
            <person name="Ouyang S."/>
            <person name="Schwartz D.C."/>
            <person name="Tanaka T."/>
            <person name="Wu J."/>
            <person name="Zhou S."/>
            <person name="Childs K.L."/>
            <person name="Davidson R.M."/>
            <person name="Lin H."/>
            <person name="Quesada-Ocampo L."/>
            <person name="Vaillancourt B."/>
            <person name="Sakai H."/>
            <person name="Lee S.S."/>
            <person name="Kim J."/>
            <person name="Numa H."/>
            <person name="Itoh T."/>
            <person name="Buell C.R."/>
            <person name="Matsumoto T."/>
        </authorList>
    </citation>
    <scope>GENOME REANNOTATION</scope>
    <source>
        <strain>cv. Nipponbare</strain>
    </source>
</reference>
<keyword id="KW-0251">Elongation factor</keyword>
<keyword id="KW-0342">GTP-binding</keyword>
<keyword id="KW-0496">Mitochondrion</keyword>
<keyword id="KW-0547">Nucleotide-binding</keyword>
<keyword id="KW-0648">Protein biosynthesis</keyword>
<keyword id="KW-1185">Reference proteome</keyword>